<proteinExistence type="inferred from homology"/>
<reference key="1">
    <citation type="submission" date="2005-10" db="EMBL/GenBank/DDBJ databases">
        <title>Complete sequence of chromosome 3 of Burkholderia sp. 383.</title>
        <authorList>
            <consortium name="US DOE Joint Genome Institute"/>
            <person name="Copeland A."/>
            <person name="Lucas S."/>
            <person name="Lapidus A."/>
            <person name="Barry K."/>
            <person name="Detter J.C."/>
            <person name="Glavina T."/>
            <person name="Hammon N."/>
            <person name="Israni S."/>
            <person name="Pitluck S."/>
            <person name="Chain P."/>
            <person name="Malfatti S."/>
            <person name="Shin M."/>
            <person name="Vergez L."/>
            <person name="Schmutz J."/>
            <person name="Larimer F."/>
            <person name="Land M."/>
            <person name="Kyrpides N."/>
            <person name="Lykidis A."/>
            <person name="Richardson P."/>
        </authorList>
    </citation>
    <scope>NUCLEOTIDE SEQUENCE [LARGE SCALE GENOMIC DNA]</scope>
    <source>
        <strain>ATCC 17760 / DSM 23089 / LMG 22485 / NCIMB 9086 / R18194 / 383</strain>
    </source>
</reference>
<keyword id="KW-0058">Aromatic hydrocarbons catabolism</keyword>
<keyword id="KW-0456">Lyase</keyword>
<keyword id="KW-0464">Manganese</keyword>
<keyword id="KW-0479">Metal-binding</keyword>
<comment type="catalytic activity">
    <reaction evidence="1">
        <text>(S)-4-hydroxy-2-oxopentanoate = acetaldehyde + pyruvate</text>
        <dbReference type="Rhea" id="RHEA:22624"/>
        <dbReference type="ChEBI" id="CHEBI:15343"/>
        <dbReference type="ChEBI" id="CHEBI:15361"/>
        <dbReference type="ChEBI" id="CHEBI:73143"/>
        <dbReference type="EC" id="4.1.3.39"/>
    </reaction>
</comment>
<comment type="similarity">
    <text evidence="1">Belongs to the 4-hydroxy-2-oxovalerate aldolase family.</text>
</comment>
<feature type="chain" id="PRO_0000387806" description="4-hydroxy-2-oxovalerate aldolase 4">
    <location>
        <begin position="1"/>
        <end position="342"/>
    </location>
</feature>
<feature type="domain" description="Pyruvate carboxyltransferase" evidence="1">
    <location>
        <begin position="8"/>
        <end position="260"/>
    </location>
</feature>
<feature type="active site" description="Proton acceptor" evidence="1">
    <location>
        <position position="20"/>
    </location>
</feature>
<feature type="binding site" evidence="1">
    <location>
        <begin position="16"/>
        <end position="17"/>
    </location>
    <ligand>
        <name>substrate</name>
    </ligand>
</feature>
<feature type="binding site" evidence="1">
    <location>
        <position position="17"/>
    </location>
    <ligand>
        <name>Mn(2+)</name>
        <dbReference type="ChEBI" id="CHEBI:29035"/>
    </ligand>
</feature>
<feature type="binding site" evidence="1">
    <location>
        <position position="170"/>
    </location>
    <ligand>
        <name>substrate</name>
    </ligand>
</feature>
<feature type="binding site" evidence="1">
    <location>
        <position position="199"/>
    </location>
    <ligand>
        <name>Mn(2+)</name>
        <dbReference type="ChEBI" id="CHEBI:29035"/>
    </ligand>
</feature>
<feature type="binding site" evidence="1">
    <location>
        <position position="199"/>
    </location>
    <ligand>
        <name>substrate</name>
    </ligand>
</feature>
<feature type="binding site" evidence="1">
    <location>
        <position position="201"/>
    </location>
    <ligand>
        <name>Mn(2+)</name>
        <dbReference type="ChEBI" id="CHEBI:29035"/>
    </ligand>
</feature>
<feature type="binding site" evidence="1">
    <location>
        <position position="290"/>
    </location>
    <ligand>
        <name>substrate</name>
    </ligand>
</feature>
<feature type="site" description="Transition state stabilizer" evidence="1">
    <location>
        <position position="16"/>
    </location>
</feature>
<protein>
    <recommendedName>
        <fullName evidence="1">4-hydroxy-2-oxovalerate aldolase 4</fullName>
        <shortName evidence="1">HOA 4</shortName>
        <ecNumber evidence="1">4.1.3.39</ecNumber>
    </recommendedName>
    <alternativeName>
        <fullName evidence="1">4-hydroxy-2-keto-pentanoic acid aldolase 4</fullName>
    </alternativeName>
    <alternativeName>
        <fullName evidence="1">4-hydroxy-2-oxopentanoate aldolase 4</fullName>
    </alternativeName>
</protein>
<evidence type="ECO:0000255" key="1">
    <source>
        <dbReference type="HAMAP-Rule" id="MF_01656"/>
    </source>
</evidence>
<organism>
    <name type="scientific">Burkholderia lata (strain ATCC 17760 / DSM 23089 / LMG 22485 / NCIMB 9086 / R18194 / 383)</name>
    <dbReference type="NCBI Taxonomy" id="482957"/>
    <lineage>
        <taxon>Bacteria</taxon>
        <taxon>Pseudomonadati</taxon>
        <taxon>Pseudomonadota</taxon>
        <taxon>Betaproteobacteria</taxon>
        <taxon>Burkholderiales</taxon>
        <taxon>Burkholderiaceae</taxon>
        <taxon>Burkholderia</taxon>
        <taxon>Burkholderia cepacia complex</taxon>
    </lineage>
</organism>
<dbReference type="EC" id="4.1.3.39" evidence="1"/>
<dbReference type="EMBL" id="CP000150">
    <property type="protein sequence ID" value="ABB06688.1"/>
    <property type="molecule type" value="Genomic_DNA"/>
</dbReference>
<dbReference type="RefSeq" id="WP_011350330.1">
    <property type="nucleotide sequence ID" value="NC_007509.1"/>
</dbReference>
<dbReference type="SMR" id="Q39LH8"/>
<dbReference type="GeneID" id="45092992"/>
<dbReference type="KEGG" id="bur:Bcep18194_C7644"/>
<dbReference type="PATRIC" id="fig|482957.22.peg.8260"/>
<dbReference type="HOGENOM" id="CLU_049173_0_0_4"/>
<dbReference type="Proteomes" id="UP000002705">
    <property type="component" value="Chromosome 3"/>
</dbReference>
<dbReference type="GO" id="GO:0003852">
    <property type="term" value="F:2-isopropylmalate synthase activity"/>
    <property type="evidence" value="ECO:0007669"/>
    <property type="project" value="TreeGrafter"/>
</dbReference>
<dbReference type="GO" id="GO:0008701">
    <property type="term" value="F:4-hydroxy-2-oxovalerate aldolase activity"/>
    <property type="evidence" value="ECO:0007669"/>
    <property type="project" value="UniProtKB-UniRule"/>
</dbReference>
<dbReference type="GO" id="GO:0030145">
    <property type="term" value="F:manganese ion binding"/>
    <property type="evidence" value="ECO:0007669"/>
    <property type="project" value="UniProtKB-UniRule"/>
</dbReference>
<dbReference type="GO" id="GO:0009056">
    <property type="term" value="P:catabolic process"/>
    <property type="evidence" value="ECO:0007669"/>
    <property type="project" value="UniProtKB-KW"/>
</dbReference>
<dbReference type="GO" id="GO:0009098">
    <property type="term" value="P:L-leucine biosynthetic process"/>
    <property type="evidence" value="ECO:0007669"/>
    <property type="project" value="TreeGrafter"/>
</dbReference>
<dbReference type="CDD" id="cd07943">
    <property type="entry name" value="DRE_TIM_HOA"/>
    <property type="match status" value="1"/>
</dbReference>
<dbReference type="FunFam" id="1.10.8.60:FF:000042">
    <property type="entry name" value="4-hydroxy-2-oxovalerate aldolase"/>
    <property type="match status" value="1"/>
</dbReference>
<dbReference type="Gene3D" id="1.10.8.60">
    <property type="match status" value="1"/>
</dbReference>
<dbReference type="Gene3D" id="3.20.20.70">
    <property type="entry name" value="Aldolase class I"/>
    <property type="match status" value="1"/>
</dbReference>
<dbReference type="HAMAP" id="MF_01656">
    <property type="entry name" value="HOA"/>
    <property type="match status" value="1"/>
</dbReference>
<dbReference type="InterPro" id="IPR050073">
    <property type="entry name" value="2-IPM_HCS-like"/>
</dbReference>
<dbReference type="InterPro" id="IPR017629">
    <property type="entry name" value="4OH_2_O-val_aldolase"/>
</dbReference>
<dbReference type="InterPro" id="IPR013785">
    <property type="entry name" value="Aldolase_TIM"/>
</dbReference>
<dbReference type="InterPro" id="IPR012425">
    <property type="entry name" value="DmpG_comm"/>
</dbReference>
<dbReference type="InterPro" id="IPR035685">
    <property type="entry name" value="DRE_TIM_HOA"/>
</dbReference>
<dbReference type="InterPro" id="IPR000891">
    <property type="entry name" value="PYR_CT"/>
</dbReference>
<dbReference type="NCBIfam" id="TIGR03217">
    <property type="entry name" value="4OH_2_O_val_ald"/>
    <property type="match status" value="1"/>
</dbReference>
<dbReference type="NCBIfam" id="NF006049">
    <property type="entry name" value="PRK08195.1"/>
    <property type="match status" value="1"/>
</dbReference>
<dbReference type="PANTHER" id="PTHR10277:SF9">
    <property type="entry name" value="2-ISOPROPYLMALATE SYNTHASE 1, CHLOROPLASTIC-RELATED"/>
    <property type="match status" value="1"/>
</dbReference>
<dbReference type="PANTHER" id="PTHR10277">
    <property type="entry name" value="HOMOCITRATE SYNTHASE-RELATED"/>
    <property type="match status" value="1"/>
</dbReference>
<dbReference type="Pfam" id="PF07836">
    <property type="entry name" value="DmpG_comm"/>
    <property type="match status" value="1"/>
</dbReference>
<dbReference type="Pfam" id="PF00682">
    <property type="entry name" value="HMGL-like"/>
    <property type="match status" value="1"/>
</dbReference>
<dbReference type="SUPFAM" id="SSF51569">
    <property type="entry name" value="Aldolase"/>
    <property type="match status" value="1"/>
</dbReference>
<dbReference type="SUPFAM" id="SSF89000">
    <property type="entry name" value="post-HMGL domain-like"/>
    <property type="match status" value="1"/>
</dbReference>
<dbReference type="PROSITE" id="PS50991">
    <property type="entry name" value="PYR_CT"/>
    <property type="match status" value="1"/>
</dbReference>
<name>HOA4_BURL3</name>
<gene>
    <name type="ordered locus">Bcep18194_C7644</name>
</gene>
<sequence>MTDQTNKIYLSDVTLRDGMHAIRHQYSLDSAVAIARALDDAGVDSIEVAHGDGLSGSSFNYGFGAHTDLQWIEAVAGTVKRAQVATLLLPGIGTVHDLRAAYDAGARIVRIATHCTEADISKQHIAYARELGMDTVGFLMMSHMTSPDALAQQAKLMESYGAQCVYVVDSGGALGMRDVAARFDALKAVLDPATQTGMHAHHNLSLGVANSIVALEHGCDRIDASLTGMGAGAGNAPLEVFVAAVDRLGLHHGCDVKQLIDAAEDIVRPLQERPVRVDRETLALGYAGVYSSFLRHTEAAAAKYGLSAFDIMVELGRRRMVGGQEDMIVDVALDMLKAREAA</sequence>
<accession>Q39LH8</accession>